<evidence type="ECO:0000250" key="1"/>
<evidence type="ECO:0000250" key="2">
    <source>
        <dbReference type="UniProtKB" id="O43809"/>
    </source>
</evidence>
<evidence type="ECO:0000250" key="3">
    <source>
        <dbReference type="UniProtKB" id="Q9CQF3"/>
    </source>
</evidence>
<evidence type="ECO:0000255" key="4">
    <source>
        <dbReference type="PROSITE-ProRule" id="PRU00794"/>
    </source>
</evidence>
<evidence type="ECO:0000305" key="5"/>
<keyword id="KW-0007">Acetylation</keyword>
<keyword id="KW-0963">Cytoplasm</keyword>
<keyword id="KW-0488">Methylation</keyword>
<keyword id="KW-0507">mRNA processing</keyword>
<keyword id="KW-0539">Nucleus</keyword>
<keyword id="KW-0597">Phosphoprotein</keyword>
<keyword id="KW-1185">Reference proteome</keyword>
<keyword id="KW-0694">RNA-binding</keyword>
<feature type="initiator methionine" description="Removed" evidence="2">
    <location>
        <position position="1"/>
    </location>
</feature>
<feature type="chain" id="PRO_0000057149" description="Cleavage and polyadenylation specificity factor subunit 5">
    <location>
        <begin position="2"/>
        <end position="227"/>
    </location>
</feature>
<feature type="domain" description="Nudix hydrolase" evidence="4">
    <location>
        <begin position="76"/>
        <end position="201"/>
    </location>
</feature>
<feature type="region of interest" description="Necessary for RNA-binding" evidence="2">
    <location>
        <begin position="2"/>
        <end position="147"/>
    </location>
</feature>
<feature type="region of interest" description="Necessary for interactions with PAPOLA and PABPN1" evidence="2">
    <location>
        <begin position="81"/>
        <end position="160"/>
    </location>
</feature>
<feature type="region of interest" description="Interaction with RNA" evidence="2">
    <location>
        <begin position="102"/>
        <end position="104"/>
    </location>
</feature>
<feature type="short sequence motif" description="Nudix box">
    <location>
        <begin position="109"/>
        <end position="130"/>
    </location>
</feature>
<feature type="site" description="Interaction with RNA" evidence="2">
    <location>
        <position position="55"/>
    </location>
</feature>
<feature type="site" description="Interaction with RNA" evidence="2">
    <location>
        <position position="63"/>
    </location>
</feature>
<feature type="site" description="Interaction with RNA" evidence="1">
    <location>
        <position position="208"/>
    </location>
</feature>
<feature type="modified residue" description="N-acetylserine" evidence="2">
    <location>
        <position position="2"/>
    </location>
</feature>
<feature type="modified residue" description="Omega-N-methylarginine" evidence="2">
    <location>
        <position position="15"/>
    </location>
</feature>
<feature type="modified residue" description="N6-acetyllysine" evidence="2">
    <location>
        <position position="23"/>
    </location>
</feature>
<feature type="modified residue" description="N6-acetyllysine" evidence="2">
    <location>
        <position position="29"/>
    </location>
</feature>
<feature type="modified residue" description="Phosphotyrosine" evidence="2">
    <location>
        <position position="40"/>
    </location>
</feature>
<feature type="modified residue" description="N6-acetyllysine" evidence="2">
    <location>
        <position position="56"/>
    </location>
</feature>
<reference key="1">
    <citation type="submission" date="2005-08" db="EMBL/GenBank/DDBJ databases">
        <authorList>
            <consortium name="NIH - Mammalian Gene Collection (MGC) project"/>
        </authorList>
    </citation>
    <scope>NUCLEOTIDE SEQUENCE [LARGE SCALE MRNA]</scope>
    <source>
        <strain>Crossbred X Angus</strain>
        <tissue>Ileum</tissue>
    </source>
</reference>
<accession>Q3ZCA2</accession>
<name>CPSF5_BOVIN</name>
<dbReference type="EMBL" id="BC102697">
    <property type="protein sequence ID" value="AAI02698.1"/>
    <property type="molecule type" value="mRNA"/>
</dbReference>
<dbReference type="RefSeq" id="NP_001030408.1">
    <property type="nucleotide sequence ID" value="NM_001035331.2"/>
</dbReference>
<dbReference type="SMR" id="Q3ZCA2"/>
<dbReference type="FunCoup" id="Q3ZCA2">
    <property type="interactions" value="5173"/>
</dbReference>
<dbReference type="STRING" id="9913.ENSBTAP00000013467"/>
<dbReference type="PaxDb" id="9913-ENSBTAP00000013467"/>
<dbReference type="PeptideAtlas" id="Q3ZCA2"/>
<dbReference type="GeneID" id="518859"/>
<dbReference type="KEGG" id="bta:518859"/>
<dbReference type="CTD" id="11051"/>
<dbReference type="VEuPathDB" id="HostDB:ENSBTAG00000010207"/>
<dbReference type="eggNOG" id="KOG1689">
    <property type="taxonomic scope" value="Eukaryota"/>
</dbReference>
<dbReference type="HOGENOM" id="CLU_068704_2_1_1"/>
<dbReference type="InParanoid" id="Q3ZCA2"/>
<dbReference type="OMA" id="NDEWEIG"/>
<dbReference type="OrthoDB" id="277288at2759"/>
<dbReference type="TreeFam" id="TF106356"/>
<dbReference type="Reactome" id="R-BTA-72187">
    <property type="pathway name" value="mRNA 3'-end processing"/>
</dbReference>
<dbReference type="Reactome" id="R-BTA-72203">
    <property type="pathway name" value="Processing of Capped Intron-Containing Pre-mRNA"/>
</dbReference>
<dbReference type="Reactome" id="R-BTA-73856">
    <property type="pathway name" value="RNA Polymerase II Transcription Termination"/>
</dbReference>
<dbReference type="Reactome" id="R-BTA-77595">
    <property type="pathway name" value="Processing of Intronless Pre-mRNAs"/>
</dbReference>
<dbReference type="Proteomes" id="UP000009136">
    <property type="component" value="Chromosome 18"/>
</dbReference>
<dbReference type="Bgee" id="ENSBTAG00000010207">
    <property type="expression patterns" value="Expressed in oocyte and 110 other cell types or tissues"/>
</dbReference>
<dbReference type="GO" id="GO:0005737">
    <property type="term" value="C:cytoplasm"/>
    <property type="evidence" value="ECO:0000250"/>
    <property type="project" value="UniProtKB"/>
</dbReference>
<dbReference type="GO" id="GO:0005849">
    <property type="term" value="C:mRNA cleavage factor complex"/>
    <property type="evidence" value="ECO:0000250"/>
    <property type="project" value="UniProtKB"/>
</dbReference>
<dbReference type="GO" id="GO:0005634">
    <property type="term" value="C:nucleus"/>
    <property type="evidence" value="ECO:0000250"/>
    <property type="project" value="UniProtKB"/>
</dbReference>
<dbReference type="GO" id="GO:0042382">
    <property type="term" value="C:paraspeckles"/>
    <property type="evidence" value="ECO:0000250"/>
    <property type="project" value="UniProtKB"/>
</dbReference>
<dbReference type="GO" id="GO:0003682">
    <property type="term" value="F:chromatin binding"/>
    <property type="evidence" value="ECO:0000250"/>
    <property type="project" value="UniProtKB"/>
</dbReference>
<dbReference type="GO" id="GO:0042802">
    <property type="term" value="F:identical protein binding"/>
    <property type="evidence" value="ECO:0000250"/>
    <property type="project" value="UniProtKB"/>
</dbReference>
<dbReference type="GO" id="GO:0035925">
    <property type="term" value="F:mRNA 3'-UTR AU-rich region binding"/>
    <property type="evidence" value="ECO:0000250"/>
    <property type="project" value="UniProtKB"/>
</dbReference>
<dbReference type="GO" id="GO:0003729">
    <property type="term" value="F:mRNA binding"/>
    <property type="evidence" value="ECO:0000250"/>
    <property type="project" value="UniProtKB"/>
</dbReference>
<dbReference type="GO" id="GO:0180010">
    <property type="term" value="P:co-transcriptional mRNA 3'-end processing, cleavage and polyadenylation pathway"/>
    <property type="evidence" value="ECO:0000250"/>
    <property type="project" value="UniProtKB"/>
</dbReference>
<dbReference type="GO" id="GO:0031124">
    <property type="term" value="P:mRNA 3'-end processing"/>
    <property type="evidence" value="ECO:0000250"/>
    <property type="project" value="UniProtKB"/>
</dbReference>
<dbReference type="GO" id="GO:0110104">
    <property type="term" value="P:mRNA alternative polyadenylation"/>
    <property type="evidence" value="ECO:0000250"/>
    <property type="project" value="UniProtKB"/>
</dbReference>
<dbReference type="GO" id="GO:0006397">
    <property type="term" value="P:mRNA processing"/>
    <property type="evidence" value="ECO:0000250"/>
    <property type="project" value="UniProtKB"/>
</dbReference>
<dbReference type="GO" id="GO:0051290">
    <property type="term" value="P:protein heterotetramerization"/>
    <property type="evidence" value="ECO:0000250"/>
    <property type="project" value="UniProtKB"/>
</dbReference>
<dbReference type="CDD" id="cd18871">
    <property type="entry name" value="NUDIX_Cfim25_Nudt21"/>
    <property type="match status" value="1"/>
</dbReference>
<dbReference type="FunFam" id="3.90.79.10:FF:000008">
    <property type="entry name" value="cleavage and polyadenylation specificity factor subunit 5"/>
    <property type="match status" value="1"/>
</dbReference>
<dbReference type="Gene3D" id="3.90.79.10">
    <property type="entry name" value="Nucleoside Triphosphate Pyrophosphohydrolase"/>
    <property type="match status" value="1"/>
</dbReference>
<dbReference type="InterPro" id="IPR016706">
    <property type="entry name" value="Cleav_polyA_spec_factor_su5"/>
</dbReference>
<dbReference type="InterPro" id="IPR015797">
    <property type="entry name" value="NUDIX_hydrolase-like_dom_sf"/>
</dbReference>
<dbReference type="InterPro" id="IPR000086">
    <property type="entry name" value="NUDIX_hydrolase_dom"/>
</dbReference>
<dbReference type="PANTHER" id="PTHR13047">
    <property type="entry name" value="PRE-MRNA CLEAVAGE FACTOR IM, 25KD SUBUNIT"/>
    <property type="match status" value="1"/>
</dbReference>
<dbReference type="Pfam" id="PF13869">
    <property type="entry name" value="NUDIX_2"/>
    <property type="match status" value="1"/>
</dbReference>
<dbReference type="PIRSF" id="PIRSF017888">
    <property type="entry name" value="CPSF-25"/>
    <property type="match status" value="1"/>
</dbReference>
<dbReference type="SUPFAM" id="SSF55811">
    <property type="entry name" value="Nudix"/>
    <property type="match status" value="1"/>
</dbReference>
<dbReference type="PROSITE" id="PS51462">
    <property type="entry name" value="NUDIX"/>
    <property type="match status" value="1"/>
</dbReference>
<protein>
    <recommendedName>
        <fullName>Cleavage and polyadenylation specificity factor subunit 5</fullName>
    </recommendedName>
    <alternativeName>
        <fullName>Nucleoside diphosphate-linked moiety X motif 21</fullName>
        <shortName>Nudix motif 21</shortName>
    </alternativeName>
</protein>
<sequence>MSVVPPNRSQTGWPRGVTQFGNKYIQQTKPLTLERTINLYPLTNYTFGTKEPLYEKDSSVAARFQRMREEFDKIGMRRTVEGVLIVHEHRLPHVLLLQLGTTFFKLPGGELNPGEDEVEGLKRLMTEILGRQDGVLQDWVIDDCIGNWWRPNFEPPQYPYIPAHITKPKEHKKLFLVQLQEKALFAVPKNYKLVAAPLFELYDNAPGYGPIISSLPQLLSRFNFIYN</sequence>
<comment type="function">
    <text evidence="2 3">Component of the cleavage factor Im (CFIm) complex that functions as an activator of the pre-mRNA 3'-end cleavage and polyadenylation processing required for the maturation of pre-mRNA into functional mRNAs. CFIm contributes to the recruitment of multiprotein complexes on specific sequences on the pre-mRNA 3'-end, so called cleavage and polyadenylation signals (pA signals). Most pre-mRNAs contain multiple pA signals, resulting in alternative cleavage and polyadenylation (APA) producing mRNAs with variable 3'-end formation. The CFIm complex acts as a key regulator of cleavage and polyadenylation site choice during APA through its binding to 5'-UGUA-3' elements localized in the 3'-untranslated region (UTR) for a huge number of pre-mRNAs. NUDT21/CPSF5 activates indirectly the mRNA 3'-processing machinery by recruiting CPSF6 and/or CPSF7. Binds to 5'-UGUA-3' elements localized upstream of pA signals that act as enhancers of pre-mRNA 3'-end processing. The homodimer mediates simultaneous sequence-specific recognition of two 5'-UGUA-3' elements within the pre-mRNA. Plays a role in somatic cell fate transitions and pluripotency by regulating widespread changes in gene expression through an APA-dependent function. Binds to chromatin. Binds to, but does not hydrolyze mono- and di-adenosine nucleotides.</text>
</comment>
<comment type="subunit">
    <text evidence="2">Homodimer (via N- and C-terminus); binds RNA as homodimer. Component of the cleavage factor Im (CFIm) complex which is a heterotetramer composed of two subunits of NUDT21/CPSF5 and two subunits of CPSF6 or CPSF7 or a heterodimer of CPSF6 and CPSF7. The cleavage factor Im (CFIm) complex associates with the CPSF and CSTF complexes to promote the assembly of the core mRNA 3'-processing machinery. Interacts with CPSF6 (via the RRM domain); this interaction is direct and enhances binding to RNA. Interacts with CPSF7. Interacts with FIP1L1; this interaction occurs in a RNA sequence-specific manner. Interacts with PABPN1. Interacts (via N-terminus) with PAPOLA (via C-terminus); this interaction is direct and diminished by acetylation. Interacts with SNRNP70. Interacts with VIRMA.</text>
</comment>
<comment type="subcellular location">
    <subcellularLocation>
        <location evidence="2">Nucleus</location>
    </subcellularLocation>
    <subcellularLocation>
        <location evidence="2">Cytoplasm</location>
    </subcellularLocation>
    <text evidence="2">Shuttles between the nucleus and the cytoplasm in a transcription- and XPO1/CRM1-independent manner, most probably in complex with the cleavage factor Im complex (CFIm). In punctate subnuclear structures localized adjacent to nuclear speckles, called paraspeckles.</text>
</comment>
<comment type="PTM">
    <text evidence="2">Acetylated mainly by p300/CBP, recruited to the complex by CPSF6. Acetylation decreases interaction with PAPAO. Deacetylated by the class I/II HDACs, HDAC1, HDAC3 and HDAC10, and by the class III HDACs, SIRT1 and SIRT2.</text>
</comment>
<comment type="similarity">
    <text evidence="5">Belongs to the Nudix hydrolase family. CPSF5 subfamily.</text>
</comment>
<comment type="caution">
    <text evidence="5">Lacks the conserved metal-binding residues in the NUDIX motif and is not expected to have hydrolase activity.</text>
</comment>
<organism>
    <name type="scientific">Bos taurus</name>
    <name type="common">Bovine</name>
    <dbReference type="NCBI Taxonomy" id="9913"/>
    <lineage>
        <taxon>Eukaryota</taxon>
        <taxon>Metazoa</taxon>
        <taxon>Chordata</taxon>
        <taxon>Craniata</taxon>
        <taxon>Vertebrata</taxon>
        <taxon>Euteleostomi</taxon>
        <taxon>Mammalia</taxon>
        <taxon>Eutheria</taxon>
        <taxon>Laurasiatheria</taxon>
        <taxon>Artiodactyla</taxon>
        <taxon>Ruminantia</taxon>
        <taxon>Pecora</taxon>
        <taxon>Bovidae</taxon>
        <taxon>Bovinae</taxon>
        <taxon>Bos</taxon>
    </lineage>
</organism>
<proteinExistence type="evidence at transcript level"/>
<gene>
    <name type="primary">NUDT21</name>
    <name type="synonym">CPSF5</name>
</gene>